<comment type="disruption phenotype">
    <text evidence="1">Loss of production of extracellular death factor.</text>
</comment>
<comment type="caution">
    <text evidence="2">Could be the product of a pseudogene. The original protein is truncated by the IS2H element which is inserted right before residue 10. The original N-terminal of this protein is not known.</text>
</comment>
<keyword id="KW-1185">Reference proteome</keyword>
<organism>
    <name type="scientific">Escherichia coli (strain K12)</name>
    <dbReference type="NCBI Taxonomy" id="83333"/>
    <lineage>
        <taxon>Bacteria</taxon>
        <taxon>Pseudomonadati</taxon>
        <taxon>Pseudomonadota</taxon>
        <taxon>Gammaproteobacteria</taxon>
        <taxon>Enterobacterales</taxon>
        <taxon>Enterobacteriaceae</taxon>
        <taxon>Escherichia</taxon>
    </lineage>
</organism>
<sequence length="141" mass="16403">MSGNIGANPINNWNLLPLICLLSGCHFYRERFAERGFFYKVPDVLRDYLSAIPLEINEKARYKPGIANYHNIITCGFSTLLPYIRQQPLAMQQRFNLLFPDFVDHIQSPLPLASTLLERITFYAKKNRDELDKISCKWCCD</sequence>
<proteinExistence type="uncertain"/>
<reference key="1">
    <citation type="journal article" date="1997" name="Science">
        <title>The complete genome sequence of Escherichia coli K-12.</title>
        <authorList>
            <person name="Blattner F.R."/>
            <person name="Plunkett G. III"/>
            <person name="Bloch C.A."/>
            <person name="Perna N.T."/>
            <person name="Burland V."/>
            <person name="Riley M."/>
            <person name="Collado-Vides J."/>
            <person name="Glasner J.D."/>
            <person name="Rode C.K."/>
            <person name="Mayhew G.F."/>
            <person name="Gregor J."/>
            <person name="Davis N.W."/>
            <person name="Kirkpatrick H.A."/>
            <person name="Goeden M.A."/>
            <person name="Rose D.J."/>
            <person name="Mau B."/>
            <person name="Shao Y."/>
        </authorList>
    </citation>
    <scope>NUCLEOTIDE SEQUENCE [LARGE SCALE GENOMIC DNA]</scope>
    <source>
        <strain>K12 / MG1655 / ATCC 47076</strain>
    </source>
</reference>
<reference key="2">
    <citation type="journal article" date="2006" name="Mol. Syst. Biol.">
        <title>Highly accurate genome sequences of Escherichia coli K-12 strains MG1655 and W3110.</title>
        <authorList>
            <person name="Hayashi K."/>
            <person name="Morooka N."/>
            <person name="Yamamoto Y."/>
            <person name="Fujita K."/>
            <person name="Isono K."/>
            <person name="Choi S."/>
            <person name="Ohtsubo E."/>
            <person name="Baba T."/>
            <person name="Wanner B.L."/>
            <person name="Mori H."/>
            <person name="Horiuchi T."/>
        </authorList>
    </citation>
    <scope>NUCLEOTIDE SEQUENCE [LARGE SCALE GENOMIC DNA]</scope>
    <source>
        <strain>K12 / W3110 / ATCC 27325 / DSM 5911</strain>
    </source>
</reference>
<reference key="3">
    <citation type="journal article" date="2007" name="Science">
        <title>A linear pentapeptide is a quorum-sensing factor required for mazEF-mediated cell death in Escherichia coli.</title>
        <authorList>
            <person name="Kolodkin-Gal I."/>
            <person name="Hazan R."/>
            <person name="Gaathon A."/>
            <person name="Carmeli S."/>
            <person name="Engelberg-Kulka H."/>
        </authorList>
    </citation>
    <scope>DISRUPTION PHENOTYPE</scope>
    <source>
        <strain>K12 / MC4100 / ATCC 35695 / DSM 6574</strain>
    </source>
</reference>
<feature type="chain" id="PRO_0000271885" description="Putative uncharacterized protein YgeO">
    <location>
        <begin position="1"/>
        <end position="141"/>
    </location>
</feature>
<protein>
    <recommendedName>
        <fullName>Putative uncharacterized protein YgeO</fullName>
    </recommendedName>
</protein>
<name>YGEO_ECOLI</name>
<evidence type="ECO:0000269" key="1">
    <source>
    </source>
</evidence>
<evidence type="ECO:0000305" key="2"/>
<accession>Q46795</accession>
<accession>Q2M9Y0</accession>
<accession>Q7DFU8</accession>
<dbReference type="EMBL" id="U28375">
    <property type="protein sequence ID" value="AAA83041.1"/>
    <property type="molecule type" value="Genomic_DNA"/>
</dbReference>
<dbReference type="EMBL" id="U00096">
    <property type="status" value="NOT_ANNOTATED_CDS"/>
    <property type="molecule type" value="Genomic_DNA"/>
</dbReference>
<dbReference type="EMBL" id="AP009048">
    <property type="protein sequence ID" value="BAE76926.1"/>
    <property type="molecule type" value="Genomic_DNA"/>
</dbReference>
<dbReference type="PIR" id="D65069">
    <property type="entry name" value="D65069"/>
</dbReference>
<dbReference type="BioGRID" id="4262313">
    <property type="interactions" value="550"/>
</dbReference>
<dbReference type="FunCoup" id="Q46795">
    <property type="interactions" value="1"/>
</dbReference>
<dbReference type="KEGG" id="ecj:JW5846"/>
<dbReference type="HOGENOM" id="CLU_092002_0_0_6"/>
<dbReference type="InParanoid" id="Q46795"/>
<dbReference type="PhylomeDB" id="Q46795"/>
<dbReference type="Proteomes" id="UP000000625">
    <property type="component" value="Chromosome"/>
</dbReference>
<dbReference type="InterPro" id="IPR013388">
    <property type="entry name" value="T3SS_OrgA/MxiK"/>
</dbReference>
<dbReference type="NCBIfam" id="TIGR02555">
    <property type="entry name" value="OrgA_MxiK"/>
    <property type="match status" value="1"/>
</dbReference>
<dbReference type="Pfam" id="PF09482">
    <property type="entry name" value="OrgA_MxiK"/>
    <property type="match status" value="1"/>
</dbReference>
<gene>
    <name type="primary">ygeO</name>
    <name type="ordered locus">b2859</name>
    <name type="ordered locus">JW5846</name>
</gene>